<dbReference type="EMBL" id="CP000243">
    <property type="protein sequence ID" value="ABE05702.1"/>
    <property type="molecule type" value="Genomic_DNA"/>
</dbReference>
<dbReference type="RefSeq" id="WP_001240896.1">
    <property type="nucleotide sequence ID" value="NZ_CP064825.1"/>
</dbReference>
<dbReference type="SMR" id="Q1RG12"/>
<dbReference type="GeneID" id="93777248"/>
<dbReference type="KEGG" id="eci:UTI89_C0192"/>
<dbReference type="HOGENOM" id="CLU_007664_1_0_6"/>
<dbReference type="Proteomes" id="UP000001952">
    <property type="component" value="Chromosome"/>
</dbReference>
<dbReference type="GO" id="GO:1990063">
    <property type="term" value="C:Bam protein complex"/>
    <property type="evidence" value="ECO:0007669"/>
    <property type="project" value="TreeGrafter"/>
</dbReference>
<dbReference type="GO" id="GO:0043165">
    <property type="term" value="P:Gram-negative-bacterium-type cell outer membrane assembly"/>
    <property type="evidence" value="ECO:0007669"/>
    <property type="project" value="UniProtKB-UniRule"/>
</dbReference>
<dbReference type="GO" id="GO:0051205">
    <property type="term" value="P:protein insertion into membrane"/>
    <property type="evidence" value="ECO:0007669"/>
    <property type="project" value="UniProtKB-UniRule"/>
</dbReference>
<dbReference type="FunFam" id="2.40.160.50:FF:000001">
    <property type="entry name" value="Outer membrane protein assembly factor BamA"/>
    <property type="match status" value="1"/>
</dbReference>
<dbReference type="FunFam" id="3.10.20.310:FF:000001">
    <property type="entry name" value="Outer membrane protein assembly factor BamA"/>
    <property type="match status" value="1"/>
</dbReference>
<dbReference type="FunFam" id="3.10.20.310:FF:000002">
    <property type="entry name" value="Outer membrane protein assembly factor BamA"/>
    <property type="match status" value="1"/>
</dbReference>
<dbReference type="FunFam" id="3.10.20.310:FF:000003">
    <property type="entry name" value="Outer membrane protein assembly factor BamA"/>
    <property type="match status" value="1"/>
</dbReference>
<dbReference type="FunFam" id="3.10.20.310:FF:000004">
    <property type="entry name" value="Outer membrane protein assembly factor BamA"/>
    <property type="match status" value="1"/>
</dbReference>
<dbReference type="FunFam" id="3.10.20.310:FF:000005">
    <property type="entry name" value="Outer membrane protein assembly factor BamA"/>
    <property type="match status" value="1"/>
</dbReference>
<dbReference type="Gene3D" id="3.10.20.310">
    <property type="entry name" value="membrane protein fhac"/>
    <property type="match status" value="5"/>
</dbReference>
<dbReference type="Gene3D" id="2.40.160.50">
    <property type="entry name" value="membrane protein fhac: a member of the omp85/tpsb transporter family"/>
    <property type="match status" value="1"/>
</dbReference>
<dbReference type="HAMAP" id="MF_01430">
    <property type="entry name" value="OM_assembly_BamA"/>
    <property type="match status" value="1"/>
</dbReference>
<dbReference type="InterPro" id="IPR000184">
    <property type="entry name" value="Bac_surfAg_D15"/>
</dbReference>
<dbReference type="InterPro" id="IPR010827">
    <property type="entry name" value="BamA/TamA_POTRA"/>
</dbReference>
<dbReference type="InterPro" id="IPR039910">
    <property type="entry name" value="D15-like"/>
</dbReference>
<dbReference type="InterPro" id="IPR023707">
    <property type="entry name" value="OM_assembly_BamA"/>
</dbReference>
<dbReference type="InterPro" id="IPR034746">
    <property type="entry name" value="POTRA"/>
</dbReference>
<dbReference type="NCBIfam" id="TIGR03303">
    <property type="entry name" value="OM_YaeT"/>
    <property type="match status" value="1"/>
</dbReference>
<dbReference type="NCBIfam" id="NF008287">
    <property type="entry name" value="PRK11067.1"/>
    <property type="match status" value="1"/>
</dbReference>
<dbReference type="PANTHER" id="PTHR12815:SF23">
    <property type="entry name" value="OUTER MEMBRANE PROTEIN ASSEMBLY FACTOR BAMA"/>
    <property type="match status" value="1"/>
</dbReference>
<dbReference type="PANTHER" id="PTHR12815">
    <property type="entry name" value="SORTING AND ASSEMBLY MACHINERY SAMM50 PROTEIN FAMILY MEMBER"/>
    <property type="match status" value="1"/>
</dbReference>
<dbReference type="Pfam" id="PF01103">
    <property type="entry name" value="Omp85"/>
    <property type="match status" value="1"/>
</dbReference>
<dbReference type="Pfam" id="PF07244">
    <property type="entry name" value="POTRA"/>
    <property type="match status" value="4"/>
</dbReference>
<dbReference type="PIRSF" id="PIRSF006076">
    <property type="entry name" value="OM_assembly_OMP85"/>
    <property type="match status" value="1"/>
</dbReference>
<dbReference type="PROSITE" id="PS51779">
    <property type="entry name" value="POTRA"/>
    <property type="match status" value="5"/>
</dbReference>
<comment type="function">
    <text evidence="1">Part of the outer membrane protein assembly complex, which is involved in assembly and insertion of beta-barrel proteins into the outer membrane. Constitutes, with BamD, the core component of the assembly machinery.</text>
</comment>
<comment type="subunit">
    <text evidence="1">Part of the Bam complex, which is composed of the outer membrane protein BamA, and four lipoproteins BamB, BamC, BamD and BamE.</text>
</comment>
<comment type="subcellular location">
    <subcellularLocation>
        <location evidence="1">Cell outer membrane</location>
    </subcellularLocation>
</comment>
<comment type="similarity">
    <text evidence="1">Belongs to the BamA family.</text>
</comment>
<protein>
    <recommendedName>
        <fullName evidence="1">Outer membrane protein assembly factor BamA</fullName>
    </recommendedName>
</protein>
<reference key="1">
    <citation type="journal article" date="2006" name="Proc. Natl. Acad. Sci. U.S.A.">
        <title>Identification of genes subject to positive selection in uropathogenic strains of Escherichia coli: a comparative genomics approach.</title>
        <authorList>
            <person name="Chen S.L."/>
            <person name="Hung C.-S."/>
            <person name="Xu J."/>
            <person name="Reigstad C.S."/>
            <person name="Magrini V."/>
            <person name="Sabo A."/>
            <person name="Blasiar D."/>
            <person name="Bieri T."/>
            <person name="Meyer R.R."/>
            <person name="Ozersky P."/>
            <person name="Armstrong J.R."/>
            <person name="Fulton R.S."/>
            <person name="Latreille J.P."/>
            <person name="Spieth J."/>
            <person name="Hooton T.M."/>
            <person name="Mardis E.R."/>
            <person name="Hultgren S.J."/>
            <person name="Gordon J.I."/>
        </authorList>
    </citation>
    <scope>NUCLEOTIDE SEQUENCE [LARGE SCALE GENOMIC DNA]</scope>
    <source>
        <strain>UTI89 / UPEC</strain>
    </source>
</reference>
<organism>
    <name type="scientific">Escherichia coli (strain UTI89 / UPEC)</name>
    <dbReference type="NCBI Taxonomy" id="364106"/>
    <lineage>
        <taxon>Bacteria</taxon>
        <taxon>Pseudomonadati</taxon>
        <taxon>Pseudomonadota</taxon>
        <taxon>Gammaproteobacteria</taxon>
        <taxon>Enterobacterales</taxon>
        <taxon>Enterobacteriaceae</taxon>
        <taxon>Escherichia</taxon>
    </lineage>
</organism>
<evidence type="ECO:0000255" key="1">
    <source>
        <dbReference type="HAMAP-Rule" id="MF_01430"/>
    </source>
</evidence>
<evidence type="ECO:0000255" key="2">
    <source>
        <dbReference type="PROSITE-ProRule" id="PRU01115"/>
    </source>
</evidence>
<sequence length="810" mass="90553">MAMKKLLIASLLFSSATVYGAEGFVVKDIHFEGLQRVAVGAALLSMPVRTGDTVNDEDISNTIRALFATGNFEDVRVLRDGDTLLVQVKERPTIASITFSGNKSVKDDMLKQNLEASGVRVGESLDRTTIADIEKGLEDFYYSVGKYSASVKAVVTPLPRNRVDLKLVFQEGVSAEIQQINIVGNHAFTTDELISHFQLRDEVPWWNVVGDRKYQKQKLAGDLETLRSYYLDRGYARFNIDSTQVSLTPDKKGIYVTVNITEGDQYKLSGVEVSGNLAGHSAEIEQLTKIEPGELYNGTKVTKMEDDIKKLLGRYGYAYPRVQSMPEINDADKTVKLRVNVDAGNRFYVRKIRFEGNDTSKDAVLRREMRQMEGAWLGSDLVDQGKERLNRLGFFETVDTDTQRVPGSPDQVDVVYKVKERNTGSFNFGIGYGTESGVSFQAGVQQDNWLGTGYAVGINGTKNDYQTYAELSVTNPYFTVDGVSLGGRLFYNDFQADDADLSDYTNKSYGTDVTLGFPINEYNSLRAGLGYVHNSLSNMQPQVAMWRYLYSMGEHPSTSDQDNSFKTDDFTFNYGWTYNKLDRGYFPTDGSRVNLTGKVTIPGSDNEYYKVTLDTATYVPIDDDHKWVVLGRTRWGYGDGLGGKEMPFYENFYAGGSSTVRGFQSNTIGPKAVYFPHQASNYDPDYDYECATQDGAKDLCKSDDAVGGNAMAVASLEFITPTPFISDKYANSVRTSFFWDMGTVWDTNWDSSQYSGYPDYSDPSNIRMSAGIALQWMSPLGPLVFSYAQPFKKYDGDKAEQFQFNIGKTW</sequence>
<accession>Q1RG12</accession>
<proteinExistence type="inferred from homology"/>
<feature type="signal peptide" evidence="1">
    <location>
        <begin position="1"/>
        <end position="20"/>
    </location>
</feature>
<feature type="chain" id="PRO_1000024386" description="Outer membrane protein assembly factor BamA">
    <location>
        <begin position="21"/>
        <end position="810"/>
    </location>
</feature>
<feature type="domain" description="POTRA 1" evidence="2">
    <location>
        <begin position="24"/>
        <end position="91"/>
    </location>
</feature>
<feature type="domain" description="POTRA 2" evidence="2">
    <location>
        <begin position="92"/>
        <end position="172"/>
    </location>
</feature>
<feature type="domain" description="POTRA 3" evidence="2">
    <location>
        <begin position="175"/>
        <end position="263"/>
    </location>
</feature>
<feature type="domain" description="POTRA 4" evidence="2">
    <location>
        <begin position="266"/>
        <end position="344"/>
    </location>
</feature>
<feature type="domain" description="POTRA 5" evidence="2">
    <location>
        <begin position="347"/>
        <end position="421"/>
    </location>
</feature>
<gene>
    <name evidence="1" type="primary">bamA</name>
    <name type="synonym">yaeT</name>
    <name type="ordered locus">UTI89_C0192</name>
</gene>
<keyword id="KW-0998">Cell outer membrane</keyword>
<keyword id="KW-0472">Membrane</keyword>
<keyword id="KW-0677">Repeat</keyword>
<keyword id="KW-0732">Signal</keyword>
<keyword id="KW-0812">Transmembrane</keyword>
<keyword id="KW-1134">Transmembrane beta strand</keyword>
<name>BAMA_ECOUT</name>